<sequence>MGSVNESCDNYVEIFNKINYFFRDDQVINGTEYSPKEFGYFITFAYMLIILFGAIGNFLTIIVVILNPAMRTTRNFFILNLALSDFFVCIVTAPTTLYTVLYMFWPFSRTLCKIAGSLQGFNIFLSTFSIASIAVDRYVLIIFPTKRERQQNLSFCFFIMIWVISLILAVPLLQASDLTPVFVEPSCDLALYICHEQNEIWEKMIISKGTYTLAVLITQYAFPLFSLVFAYSRIAHRMKLRFANRNQNVTTNTNTSQRRRSVVERQRRTHLLLVCVVAVFAVAWLPLNVFHIFNTFELVNSFSVTTFSICHCLAMCSACLNPLIYAFFNHNFRIEFMHLFDRVGLRSLRVVIFGEQESLKKSMRTEFRSRGGCKTVTTAEPATFQRMNESMILSAMEQDEQL</sequence>
<keyword id="KW-1003">Cell membrane</keyword>
<keyword id="KW-1015">Disulfide bond</keyword>
<keyword id="KW-0297">G-protein coupled receptor</keyword>
<keyword id="KW-0325">Glycoprotein</keyword>
<keyword id="KW-0472">Membrane</keyword>
<keyword id="KW-0675">Receptor</keyword>
<keyword id="KW-1185">Reference proteome</keyword>
<keyword id="KW-0807">Transducer</keyword>
<keyword id="KW-0812">Transmembrane</keyword>
<keyword id="KW-1133">Transmembrane helix</keyword>
<reference key="1">
    <citation type="journal article" date="1998" name="Science">
        <title>Genome sequence of the nematode C. elegans: a platform for investigating biology.</title>
        <authorList>
            <consortium name="The C. elegans sequencing consortium"/>
        </authorList>
    </citation>
    <scope>NUCLEOTIDE SEQUENCE [LARGE SCALE GENOMIC DNA]</scope>
    <source>
        <strain>Bristol N2</strain>
    </source>
</reference>
<gene>
    <name type="primary">npr-11</name>
    <name type="ORF">C25G6.5</name>
</gene>
<organism>
    <name type="scientific">Caenorhabditis elegans</name>
    <dbReference type="NCBI Taxonomy" id="6239"/>
    <lineage>
        <taxon>Eukaryota</taxon>
        <taxon>Metazoa</taxon>
        <taxon>Ecdysozoa</taxon>
        <taxon>Nematoda</taxon>
        <taxon>Chromadorea</taxon>
        <taxon>Rhabditida</taxon>
        <taxon>Rhabditina</taxon>
        <taxon>Rhabditomorpha</taxon>
        <taxon>Rhabditoidea</taxon>
        <taxon>Rhabditidae</taxon>
        <taxon>Peloderinae</taxon>
        <taxon>Caenorhabditis</taxon>
    </lineage>
</organism>
<accession>Q18179</accession>
<evidence type="ECO:0000255" key="1"/>
<evidence type="ECO:0000255" key="2">
    <source>
        <dbReference type="PROSITE-ProRule" id="PRU00521"/>
    </source>
</evidence>
<name>NPR11_CAEEL</name>
<proteinExistence type="inferred from homology"/>
<comment type="function">
    <text>Could be a receptor for neuropeptide Y and peptide YY.</text>
</comment>
<comment type="subcellular location">
    <subcellularLocation>
        <location>Cell membrane</location>
        <topology>Multi-pass membrane protein</topology>
    </subcellularLocation>
</comment>
<comment type="similarity">
    <text evidence="2">Belongs to the G-protein coupled receptor 1 family.</text>
</comment>
<protein>
    <recommendedName>
        <fullName>Putative neuropeptide Y receptor 11</fullName>
        <shortName>NPY-R</shortName>
    </recommendedName>
</protein>
<feature type="chain" id="PRO_0000070237" description="Putative neuropeptide Y receptor 11">
    <location>
        <begin position="1"/>
        <end position="402"/>
    </location>
</feature>
<feature type="topological domain" description="Extracellular" evidence="1">
    <location>
        <begin position="1"/>
        <end position="45"/>
    </location>
</feature>
<feature type="transmembrane region" description="Helical; Name=1" evidence="1">
    <location>
        <begin position="46"/>
        <end position="66"/>
    </location>
</feature>
<feature type="topological domain" description="Cytoplasmic" evidence="1">
    <location>
        <begin position="67"/>
        <end position="85"/>
    </location>
</feature>
<feature type="transmembrane region" description="Helical; Name=2" evidence="1">
    <location>
        <begin position="86"/>
        <end position="106"/>
    </location>
</feature>
<feature type="topological domain" description="Extracellular" evidence="1">
    <location>
        <begin position="107"/>
        <end position="122"/>
    </location>
</feature>
<feature type="transmembrane region" description="Helical; Name=3" evidence="1">
    <location>
        <begin position="123"/>
        <end position="143"/>
    </location>
</feature>
<feature type="topological domain" description="Cytoplasmic" evidence="1">
    <location>
        <begin position="144"/>
        <end position="152"/>
    </location>
</feature>
<feature type="transmembrane region" description="Helical; Name=4" evidence="1">
    <location>
        <begin position="153"/>
        <end position="173"/>
    </location>
</feature>
<feature type="topological domain" description="Extracellular" evidence="1">
    <location>
        <begin position="174"/>
        <end position="210"/>
    </location>
</feature>
<feature type="transmembrane region" description="Helical; Name=5" evidence="1">
    <location>
        <begin position="211"/>
        <end position="231"/>
    </location>
</feature>
<feature type="topological domain" description="Cytoplasmic" evidence="1">
    <location>
        <begin position="232"/>
        <end position="272"/>
    </location>
</feature>
<feature type="transmembrane region" description="Helical; Name=6" evidence="1">
    <location>
        <begin position="273"/>
        <end position="293"/>
    </location>
</feature>
<feature type="topological domain" description="Extracellular" evidence="1">
    <location>
        <begin position="294"/>
        <end position="306"/>
    </location>
</feature>
<feature type="transmembrane region" description="Helical; Name=7" evidence="1">
    <location>
        <begin position="307"/>
        <end position="328"/>
    </location>
</feature>
<feature type="topological domain" description="Cytoplasmic" evidence="1">
    <location>
        <begin position="329"/>
        <end position="402"/>
    </location>
</feature>
<feature type="glycosylation site" description="N-linked (GlcNAc...) asparagine" evidence="1">
    <location>
        <position position="5"/>
    </location>
</feature>
<feature type="glycosylation site" description="N-linked (GlcNAc...) asparagine" evidence="1">
    <location>
        <position position="29"/>
    </location>
</feature>
<feature type="disulfide bond" evidence="2">
    <location>
        <begin position="112"/>
        <end position="194"/>
    </location>
</feature>
<dbReference type="EMBL" id="FO080674">
    <property type="protein sequence ID" value="CCD65692.2"/>
    <property type="molecule type" value="Genomic_DNA"/>
</dbReference>
<dbReference type="PIR" id="T15622">
    <property type="entry name" value="T15622"/>
</dbReference>
<dbReference type="RefSeq" id="NP_508234.2">
    <property type="nucleotide sequence ID" value="NM_075833.5"/>
</dbReference>
<dbReference type="SMR" id="Q18179"/>
<dbReference type="BioGRID" id="47760">
    <property type="interactions" value="9"/>
</dbReference>
<dbReference type="FunCoup" id="Q18179">
    <property type="interactions" value="13"/>
</dbReference>
<dbReference type="STRING" id="6239.C25G6.5.1"/>
<dbReference type="GlyCosmos" id="Q18179">
    <property type="glycosylation" value="2 sites, No reported glycans"/>
</dbReference>
<dbReference type="PaxDb" id="6239-C25G6.5"/>
<dbReference type="EnsemblMetazoa" id="C25G6.5.1">
    <property type="protein sequence ID" value="C25G6.5.1"/>
    <property type="gene ID" value="WBGene00016110"/>
</dbReference>
<dbReference type="GeneID" id="182921"/>
<dbReference type="KEGG" id="cel:CELE_C25G6.5"/>
<dbReference type="UCSC" id="C25G6.5">
    <property type="organism name" value="c. elegans"/>
</dbReference>
<dbReference type="AGR" id="WB:WBGene00016110"/>
<dbReference type="CTD" id="182921"/>
<dbReference type="WormBase" id="C25G6.5">
    <property type="protein sequence ID" value="CE47199"/>
    <property type="gene ID" value="WBGene00016110"/>
    <property type="gene designation" value="npr-11"/>
</dbReference>
<dbReference type="eggNOG" id="KOG3656">
    <property type="taxonomic scope" value="Eukaryota"/>
</dbReference>
<dbReference type="GeneTree" id="ENSGT00940000168939"/>
<dbReference type="HOGENOM" id="CLU_009579_6_1_1"/>
<dbReference type="InParanoid" id="Q18179"/>
<dbReference type="OMA" id="TVLYMFW"/>
<dbReference type="OrthoDB" id="9046662at2759"/>
<dbReference type="PhylomeDB" id="Q18179"/>
<dbReference type="PRO" id="PR:Q18179"/>
<dbReference type="Proteomes" id="UP000001940">
    <property type="component" value="Chromosome X"/>
</dbReference>
<dbReference type="Bgee" id="WBGene00016110">
    <property type="expression patterns" value="Expressed in embryo and 2 other cell types or tissues"/>
</dbReference>
<dbReference type="GO" id="GO:0005886">
    <property type="term" value="C:plasma membrane"/>
    <property type="evidence" value="ECO:0007669"/>
    <property type="project" value="UniProtKB-SubCell"/>
</dbReference>
<dbReference type="GO" id="GO:0004983">
    <property type="term" value="F:neuropeptide Y receptor activity"/>
    <property type="evidence" value="ECO:0007669"/>
    <property type="project" value="InterPro"/>
</dbReference>
<dbReference type="CDD" id="cd15203">
    <property type="entry name" value="7tmA_NPYR-like"/>
    <property type="match status" value="1"/>
</dbReference>
<dbReference type="Gene3D" id="1.20.1070.10">
    <property type="entry name" value="Rhodopsin 7-helix transmembrane proteins"/>
    <property type="match status" value="1"/>
</dbReference>
<dbReference type="InterPro" id="IPR000276">
    <property type="entry name" value="GPCR_Rhodpsn"/>
</dbReference>
<dbReference type="InterPro" id="IPR017452">
    <property type="entry name" value="GPCR_Rhodpsn_7TM"/>
</dbReference>
<dbReference type="InterPro" id="IPR000611">
    <property type="entry name" value="NPY_rcpt"/>
</dbReference>
<dbReference type="PANTHER" id="PTHR24235:SF12">
    <property type="entry name" value="G-PROTEIN COUPLED RECEPTORS FAMILY 1 PROFILE DOMAIN-CONTAINING PROTEIN"/>
    <property type="match status" value="1"/>
</dbReference>
<dbReference type="PANTHER" id="PTHR24235">
    <property type="entry name" value="NEUROPEPTIDE Y RECEPTOR"/>
    <property type="match status" value="1"/>
</dbReference>
<dbReference type="Pfam" id="PF00001">
    <property type="entry name" value="7tm_1"/>
    <property type="match status" value="1"/>
</dbReference>
<dbReference type="PRINTS" id="PR00237">
    <property type="entry name" value="GPCRRHODOPSN"/>
</dbReference>
<dbReference type="PRINTS" id="PR01012">
    <property type="entry name" value="NRPEPTIDEYR"/>
</dbReference>
<dbReference type="SMART" id="SM01381">
    <property type="entry name" value="7TM_GPCR_Srsx"/>
    <property type="match status" value="1"/>
</dbReference>
<dbReference type="SUPFAM" id="SSF81321">
    <property type="entry name" value="Family A G protein-coupled receptor-like"/>
    <property type="match status" value="1"/>
</dbReference>
<dbReference type="PROSITE" id="PS00237">
    <property type="entry name" value="G_PROTEIN_RECEP_F1_1"/>
    <property type="match status" value="1"/>
</dbReference>
<dbReference type="PROSITE" id="PS50262">
    <property type="entry name" value="G_PROTEIN_RECEP_F1_2"/>
    <property type="match status" value="1"/>
</dbReference>